<keyword id="KW-0963">Cytoplasm</keyword>
<keyword id="KW-0664">Pyridoxine biosynthesis</keyword>
<keyword id="KW-1185">Reference proteome</keyword>
<keyword id="KW-0808">Transferase</keyword>
<evidence type="ECO:0000255" key="1">
    <source>
        <dbReference type="HAMAP-Rule" id="MF_00279"/>
    </source>
</evidence>
<gene>
    <name evidence="1" type="primary">pdxJ</name>
    <name type="ordered locus">Syncc9902_1414</name>
</gene>
<organism>
    <name type="scientific">Synechococcus sp. (strain CC9902)</name>
    <dbReference type="NCBI Taxonomy" id="316279"/>
    <lineage>
        <taxon>Bacteria</taxon>
        <taxon>Bacillati</taxon>
        <taxon>Cyanobacteriota</taxon>
        <taxon>Cyanophyceae</taxon>
        <taxon>Synechococcales</taxon>
        <taxon>Synechococcaceae</taxon>
        <taxon>Synechococcus</taxon>
    </lineage>
</organism>
<reference key="1">
    <citation type="submission" date="2005-08" db="EMBL/GenBank/DDBJ databases">
        <title>Complete sequence of Synechococcus sp. CC9902.</title>
        <authorList>
            <person name="Copeland A."/>
            <person name="Lucas S."/>
            <person name="Lapidus A."/>
            <person name="Barry K."/>
            <person name="Detter J.C."/>
            <person name="Glavina T."/>
            <person name="Hammon N."/>
            <person name="Israni S."/>
            <person name="Pitluck S."/>
            <person name="Martinez M."/>
            <person name="Schmutz J."/>
            <person name="Larimer F."/>
            <person name="Land M."/>
            <person name="Kyrpides N."/>
            <person name="Ivanova N."/>
            <person name="Richardson P."/>
        </authorList>
    </citation>
    <scope>NUCLEOTIDE SEQUENCE [LARGE SCALE GENOMIC DNA]</scope>
    <source>
        <strain>CC9902</strain>
    </source>
</reference>
<dbReference type="EC" id="2.6.99.2" evidence="1"/>
<dbReference type="EMBL" id="CP000097">
    <property type="protein sequence ID" value="ABB26378.1"/>
    <property type="molecule type" value="Genomic_DNA"/>
</dbReference>
<dbReference type="RefSeq" id="WP_011360200.1">
    <property type="nucleotide sequence ID" value="NC_007513.1"/>
</dbReference>
<dbReference type="SMR" id="Q3AVH3"/>
<dbReference type="STRING" id="316279.Syncc9902_1414"/>
<dbReference type="KEGG" id="sye:Syncc9902_1414"/>
<dbReference type="eggNOG" id="COG0854">
    <property type="taxonomic scope" value="Bacteria"/>
</dbReference>
<dbReference type="HOGENOM" id="CLU_074563_0_0_3"/>
<dbReference type="OrthoDB" id="9806590at2"/>
<dbReference type="UniPathway" id="UPA00244">
    <property type="reaction ID" value="UER00313"/>
</dbReference>
<dbReference type="Proteomes" id="UP000002712">
    <property type="component" value="Chromosome"/>
</dbReference>
<dbReference type="GO" id="GO:0005829">
    <property type="term" value="C:cytosol"/>
    <property type="evidence" value="ECO:0007669"/>
    <property type="project" value="TreeGrafter"/>
</dbReference>
<dbReference type="GO" id="GO:0033856">
    <property type="term" value="F:pyridoxine 5'-phosphate synthase activity"/>
    <property type="evidence" value="ECO:0007669"/>
    <property type="project" value="UniProtKB-EC"/>
</dbReference>
<dbReference type="GO" id="GO:0008615">
    <property type="term" value="P:pyridoxine biosynthetic process"/>
    <property type="evidence" value="ECO:0007669"/>
    <property type="project" value="UniProtKB-UniRule"/>
</dbReference>
<dbReference type="CDD" id="cd00003">
    <property type="entry name" value="PNPsynthase"/>
    <property type="match status" value="1"/>
</dbReference>
<dbReference type="Gene3D" id="3.20.20.70">
    <property type="entry name" value="Aldolase class I"/>
    <property type="match status" value="1"/>
</dbReference>
<dbReference type="HAMAP" id="MF_00279">
    <property type="entry name" value="PdxJ"/>
    <property type="match status" value="1"/>
</dbReference>
<dbReference type="InterPro" id="IPR013785">
    <property type="entry name" value="Aldolase_TIM"/>
</dbReference>
<dbReference type="InterPro" id="IPR004569">
    <property type="entry name" value="PyrdxlP_synth_PdxJ"/>
</dbReference>
<dbReference type="InterPro" id="IPR036130">
    <property type="entry name" value="Pyridoxine-5'_phos_synth"/>
</dbReference>
<dbReference type="NCBIfam" id="TIGR00559">
    <property type="entry name" value="pdxJ"/>
    <property type="match status" value="1"/>
</dbReference>
<dbReference type="NCBIfam" id="NF003625">
    <property type="entry name" value="PRK05265.1-3"/>
    <property type="match status" value="1"/>
</dbReference>
<dbReference type="NCBIfam" id="NF003627">
    <property type="entry name" value="PRK05265.1-5"/>
    <property type="match status" value="1"/>
</dbReference>
<dbReference type="PANTHER" id="PTHR30456">
    <property type="entry name" value="PYRIDOXINE 5'-PHOSPHATE SYNTHASE"/>
    <property type="match status" value="1"/>
</dbReference>
<dbReference type="PANTHER" id="PTHR30456:SF0">
    <property type="entry name" value="PYRIDOXINE 5'-PHOSPHATE SYNTHASE"/>
    <property type="match status" value="1"/>
</dbReference>
<dbReference type="Pfam" id="PF03740">
    <property type="entry name" value="PdxJ"/>
    <property type="match status" value="1"/>
</dbReference>
<dbReference type="SUPFAM" id="SSF63892">
    <property type="entry name" value="Pyridoxine 5'-phosphate synthase"/>
    <property type="match status" value="1"/>
</dbReference>
<feature type="chain" id="PRO_1000022411" description="Pyridoxine 5'-phosphate synthase">
    <location>
        <begin position="1"/>
        <end position="249"/>
    </location>
</feature>
<feature type="active site" description="Proton acceptor" evidence="1">
    <location>
        <position position="43"/>
    </location>
</feature>
<feature type="active site" description="Proton acceptor" evidence="1">
    <location>
        <position position="70"/>
    </location>
</feature>
<feature type="active site" description="Proton donor" evidence="1">
    <location>
        <position position="190"/>
    </location>
</feature>
<feature type="binding site" evidence="1">
    <location>
        <position position="7"/>
    </location>
    <ligand>
        <name>3-amino-2-oxopropyl phosphate</name>
        <dbReference type="ChEBI" id="CHEBI:57279"/>
    </ligand>
</feature>
<feature type="binding site" evidence="1">
    <location>
        <begin position="9"/>
        <end position="10"/>
    </location>
    <ligand>
        <name>1-deoxy-D-xylulose 5-phosphate</name>
        <dbReference type="ChEBI" id="CHEBI:57792"/>
    </ligand>
</feature>
<feature type="binding site" evidence="1">
    <location>
        <position position="18"/>
    </location>
    <ligand>
        <name>3-amino-2-oxopropyl phosphate</name>
        <dbReference type="ChEBI" id="CHEBI:57279"/>
    </ligand>
</feature>
<feature type="binding site" evidence="1">
    <location>
        <position position="45"/>
    </location>
    <ligand>
        <name>1-deoxy-D-xylulose 5-phosphate</name>
        <dbReference type="ChEBI" id="CHEBI:57792"/>
    </ligand>
</feature>
<feature type="binding site" evidence="1">
    <location>
        <position position="50"/>
    </location>
    <ligand>
        <name>1-deoxy-D-xylulose 5-phosphate</name>
        <dbReference type="ChEBI" id="CHEBI:57792"/>
    </ligand>
</feature>
<feature type="binding site" evidence="1">
    <location>
        <position position="100"/>
    </location>
    <ligand>
        <name>1-deoxy-D-xylulose 5-phosphate</name>
        <dbReference type="ChEBI" id="CHEBI:57792"/>
    </ligand>
</feature>
<feature type="binding site" evidence="1">
    <location>
        <position position="191"/>
    </location>
    <ligand>
        <name>3-amino-2-oxopropyl phosphate</name>
        <dbReference type="ChEBI" id="CHEBI:57279"/>
    </ligand>
</feature>
<feature type="binding site" evidence="1">
    <location>
        <begin position="212"/>
        <end position="213"/>
    </location>
    <ligand>
        <name>3-amino-2-oxopropyl phosphate</name>
        <dbReference type="ChEBI" id="CHEBI:57279"/>
    </ligand>
</feature>
<feature type="site" description="Transition state stabilizer" evidence="1">
    <location>
        <position position="151"/>
    </location>
</feature>
<accession>Q3AVH3</accession>
<sequence length="249" mass="27077">MASLGVNIDHIANIREARRTVEPDPVPMAMLAELGGADGITVHLREDRRHIQDRDVELLRQTVRSRLNLEMAATAEMVAIALRVKPDMVTLVPEHRQEVTTEGGLDVVAQLSELTGMVSQLQTSGIPVSLFVDPVASQLRGCTDSGARWVELHTGRYAEGSWNDQPHELARLTEGTATARAMGLRVNAGHGLTYQNVEPVAAIPGMEELNIGHTIVARAVVVGLQQAVREMKALIQNPRRDPLFGQALG</sequence>
<proteinExistence type="inferred from homology"/>
<name>PDXJ_SYNS9</name>
<protein>
    <recommendedName>
        <fullName evidence="1">Pyridoxine 5'-phosphate synthase</fullName>
        <shortName evidence="1">PNP synthase</shortName>
        <ecNumber evidence="1">2.6.99.2</ecNumber>
    </recommendedName>
</protein>
<comment type="function">
    <text evidence="1">Catalyzes the complicated ring closure reaction between the two acyclic compounds 1-deoxy-D-xylulose-5-phosphate (DXP) and 3-amino-2-oxopropyl phosphate (1-amino-acetone-3-phosphate or AAP) to form pyridoxine 5'-phosphate (PNP) and inorganic phosphate.</text>
</comment>
<comment type="catalytic activity">
    <reaction evidence="1">
        <text>3-amino-2-oxopropyl phosphate + 1-deoxy-D-xylulose 5-phosphate = pyridoxine 5'-phosphate + phosphate + 2 H2O + H(+)</text>
        <dbReference type="Rhea" id="RHEA:15265"/>
        <dbReference type="ChEBI" id="CHEBI:15377"/>
        <dbReference type="ChEBI" id="CHEBI:15378"/>
        <dbReference type="ChEBI" id="CHEBI:43474"/>
        <dbReference type="ChEBI" id="CHEBI:57279"/>
        <dbReference type="ChEBI" id="CHEBI:57792"/>
        <dbReference type="ChEBI" id="CHEBI:58589"/>
        <dbReference type="EC" id="2.6.99.2"/>
    </reaction>
</comment>
<comment type="pathway">
    <text evidence="1">Cofactor biosynthesis; pyridoxine 5'-phosphate biosynthesis; pyridoxine 5'-phosphate from D-erythrose 4-phosphate: step 5/5.</text>
</comment>
<comment type="subunit">
    <text evidence="1">Homooctamer; tetramer of dimers.</text>
</comment>
<comment type="subcellular location">
    <subcellularLocation>
        <location evidence="1">Cytoplasm</location>
    </subcellularLocation>
</comment>
<comment type="similarity">
    <text evidence="1">Belongs to the PNP synthase family.</text>
</comment>